<comment type="function">
    <text evidence="1">CRISPR (clustered regularly interspaced short palindromic repeat), is an adaptive immune system that provides protection against mobile genetic elements (viruses, transposable elements and conjugative plasmids). CRISPR clusters contain sequences complementary to antecedent mobile elements and target invading nucleic acids. CRISPR clusters are transcribed and processed into CRISPR RNA (crRNA). Functions as a ssRNA-specific endoribonuclease. Involved in the integration of spacer DNA into the CRISPR cassette.</text>
</comment>
<comment type="cofactor">
    <cofactor evidence="1">
        <name>Mg(2+)</name>
        <dbReference type="ChEBI" id="CHEBI:18420"/>
    </cofactor>
</comment>
<comment type="subunit">
    <text evidence="1">Homodimer, forms a heterotetramer with a Cas1 homodimer.</text>
</comment>
<comment type="similarity">
    <text evidence="1">Belongs to the CRISPR-associated endoribonuclease Cas2 protein family.</text>
</comment>
<dbReference type="EC" id="3.1.-.-" evidence="1"/>
<dbReference type="EMBL" id="CP000909">
    <property type="protein sequence ID" value="ABY33800.1"/>
    <property type="molecule type" value="Genomic_DNA"/>
</dbReference>
<dbReference type="RefSeq" id="YP_001634189.1">
    <property type="nucleotide sequence ID" value="NC_010175.1"/>
</dbReference>
<dbReference type="SMR" id="A9WEP1"/>
<dbReference type="STRING" id="324602.Caur_0554"/>
<dbReference type="EnsemblBacteria" id="ABY33800">
    <property type="protein sequence ID" value="ABY33800"/>
    <property type="gene ID" value="Caur_0554"/>
</dbReference>
<dbReference type="KEGG" id="cau:Caur_0554"/>
<dbReference type="PATRIC" id="fig|324602.8.peg.634"/>
<dbReference type="eggNOG" id="COG1343">
    <property type="taxonomic scope" value="Bacteria"/>
</dbReference>
<dbReference type="HOGENOM" id="CLU_161124_3_0_0"/>
<dbReference type="InParanoid" id="A9WEP1"/>
<dbReference type="Proteomes" id="UP000002008">
    <property type="component" value="Chromosome"/>
</dbReference>
<dbReference type="GO" id="GO:0046872">
    <property type="term" value="F:metal ion binding"/>
    <property type="evidence" value="ECO:0007669"/>
    <property type="project" value="UniProtKB-UniRule"/>
</dbReference>
<dbReference type="GO" id="GO:0004521">
    <property type="term" value="F:RNA endonuclease activity"/>
    <property type="evidence" value="ECO:0007669"/>
    <property type="project" value="InterPro"/>
</dbReference>
<dbReference type="GO" id="GO:0051607">
    <property type="term" value="P:defense response to virus"/>
    <property type="evidence" value="ECO:0007669"/>
    <property type="project" value="UniProtKB-UniRule"/>
</dbReference>
<dbReference type="GO" id="GO:0043571">
    <property type="term" value="P:maintenance of CRISPR repeat elements"/>
    <property type="evidence" value="ECO:0007669"/>
    <property type="project" value="UniProtKB-UniRule"/>
</dbReference>
<dbReference type="CDD" id="cd09725">
    <property type="entry name" value="Cas2_I_II_III"/>
    <property type="match status" value="1"/>
</dbReference>
<dbReference type="Gene3D" id="3.30.70.240">
    <property type="match status" value="1"/>
</dbReference>
<dbReference type="HAMAP" id="MF_01471">
    <property type="entry name" value="Cas2"/>
    <property type="match status" value="1"/>
</dbReference>
<dbReference type="InterPro" id="IPR021127">
    <property type="entry name" value="CRISPR_associated_Cas2"/>
</dbReference>
<dbReference type="InterPro" id="IPR019199">
    <property type="entry name" value="Virulence_VapD/CRISPR_Cas2"/>
</dbReference>
<dbReference type="NCBIfam" id="TIGR01573">
    <property type="entry name" value="cas2"/>
    <property type="match status" value="1"/>
</dbReference>
<dbReference type="PANTHER" id="PTHR34405">
    <property type="entry name" value="CRISPR-ASSOCIATED ENDORIBONUCLEASE CAS2"/>
    <property type="match status" value="1"/>
</dbReference>
<dbReference type="PANTHER" id="PTHR34405:SF3">
    <property type="entry name" value="CRISPR-ASSOCIATED ENDORIBONUCLEASE CAS2 3"/>
    <property type="match status" value="1"/>
</dbReference>
<dbReference type="Pfam" id="PF09827">
    <property type="entry name" value="CRISPR_Cas2"/>
    <property type="match status" value="1"/>
</dbReference>
<dbReference type="PIRSF" id="PIRSF032582">
    <property type="entry name" value="Cas2"/>
    <property type="match status" value="1"/>
</dbReference>
<dbReference type="SUPFAM" id="SSF143430">
    <property type="entry name" value="TTP0101/SSO1404-like"/>
    <property type="match status" value="1"/>
</dbReference>
<reference key="1">
    <citation type="journal article" date="2011" name="BMC Genomics">
        <title>Complete genome sequence of the filamentous anoxygenic phototrophic bacterium Chloroflexus aurantiacus.</title>
        <authorList>
            <person name="Tang K.H."/>
            <person name="Barry K."/>
            <person name="Chertkov O."/>
            <person name="Dalin E."/>
            <person name="Han C.S."/>
            <person name="Hauser L.J."/>
            <person name="Honchak B.M."/>
            <person name="Karbach L.E."/>
            <person name="Land M.L."/>
            <person name="Lapidus A."/>
            <person name="Larimer F.W."/>
            <person name="Mikhailova N."/>
            <person name="Pitluck S."/>
            <person name="Pierson B.K."/>
            <person name="Blankenship R.E."/>
        </authorList>
    </citation>
    <scope>NUCLEOTIDE SEQUENCE [LARGE SCALE GENOMIC DNA]</scope>
    <source>
        <strain>ATCC 29366 / DSM 635 / J-10-fl</strain>
    </source>
</reference>
<keyword id="KW-0051">Antiviral defense</keyword>
<keyword id="KW-0255">Endonuclease</keyword>
<keyword id="KW-0378">Hydrolase</keyword>
<keyword id="KW-0460">Magnesium</keyword>
<keyword id="KW-0479">Metal-binding</keyword>
<keyword id="KW-0540">Nuclease</keyword>
<keyword id="KW-1185">Reference proteome</keyword>
<sequence length="93" mass="10981">MFYLISYDISVDQRRLKIAKLLEGYGQRVLESVFECDLELPAYRQLRQKLNRLIKDEEGDRLRIYRLCASCREQIEIIGDGPPPETSQDIYII</sequence>
<gene>
    <name evidence="1" type="primary">cas2-1</name>
    <name type="ordered locus">Caur_0554</name>
</gene>
<protein>
    <recommendedName>
        <fullName evidence="1">CRISPR-associated endoribonuclease Cas2 1</fullName>
        <ecNumber evidence="1">3.1.-.-</ecNumber>
    </recommendedName>
</protein>
<accession>A9WEP1</accession>
<organism>
    <name type="scientific">Chloroflexus aurantiacus (strain ATCC 29366 / DSM 635 / J-10-fl)</name>
    <dbReference type="NCBI Taxonomy" id="324602"/>
    <lineage>
        <taxon>Bacteria</taxon>
        <taxon>Bacillati</taxon>
        <taxon>Chloroflexota</taxon>
        <taxon>Chloroflexia</taxon>
        <taxon>Chloroflexales</taxon>
        <taxon>Chloroflexineae</taxon>
        <taxon>Chloroflexaceae</taxon>
        <taxon>Chloroflexus</taxon>
    </lineage>
</organism>
<feature type="chain" id="PRO_0000417708" description="CRISPR-associated endoribonuclease Cas2 1">
    <location>
        <begin position="1"/>
        <end position="93"/>
    </location>
</feature>
<feature type="binding site" evidence="1">
    <location>
        <position position="8"/>
    </location>
    <ligand>
        <name>Mg(2+)</name>
        <dbReference type="ChEBI" id="CHEBI:18420"/>
        <note>catalytic</note>
    </ligand>
</feature>
<evidence type="ECO:0000255" key="1">
    <source>
        <dbReference type="HAMAP-Rule" id="MF_01471"/>
    </source>
</evidence>
<proteinExistence type="inferred from homology"/>
<name>CAS2A_CHLAA</name>